<feature type="chain" id="PRO_0000365785" description="RNA-directed RNA polymerase L">
    <location>
        <begin position="1"/>
        <end position="2162"/>
    </location>
</feature>
<feature type="domain" description="RdRp catalytic" evidence="4">
    <location>
        <begin position="690"/>
        <end position="874"/>
    </location>
</feature>
<feature type="domain" description="Mononegavirus-type SAM-dependent 2'-O-MTase" evidence="5">
    <location>
        <begin position="1816"/>
        <end position="2004"/>
    </location>
</feature>
<feature type="region of interest" description="GDP polyribonucleotidyltransferase" evidence="2">
    <location>
        <begin position="965"/>
        <end position="1457"/>
    </location>
</feature>
<feature type="active site" description="Nucleophile; for GDP polyribonucleotidyltransferase activity" evidence="1">
    <location>
        <position position="1335"/>
    </location>
</feature>
<feature type="active site" description="For mRNA (nucleoside-2'-O-)-methyltransferase activity" evidence="3">
    <location>
        <position position="1827"/>
    </location>
</feature>
<feature type="active site" description="For mRNA (nucleoside-2'-O-)-methyltransferase activity" evidence="3">
    <location>
        <position position="1932"/>
    </location>
</feature>
<feature type="active site" description="For mRNA (nucleoside-2'-O-)-methyltransferase activity" evidence="3">
    <location>
        <position position="1969"/>
    </location>
</feature>
<feature type="active site" description="For mRNA (nucleoside-2'-O-)-methyltransferase activity" evidence="3">
    <location>
        <position position="2000"/>
    </location>
</feature>
<feature type="binding site" evidence="2">
    <location>
        <position position="697"/>
    </location>
    <ligand>
        <name>Mg(2+)</name>
        <dbReference type="ChEBI" id="CHEBI:18420"/>
        <note>catalytic; for RNA-directed RNA polymerase activity</note>
    </ligand>
</feature>
<feature type="binding site" evidence="2">
    <location>
        <position position="808"/>
    </location>
    <ligand>
        <name>Mg(2+)</name>
        <dbReference type="ChEBI" id="CHEBI:18420"/>
        <note>catalytic; for RNA-directed RNA polymerase activity</note>
    </ligand>
</feature>
<feature type="binding site" evidence="3">
    <location>
        <begin position="1849"/>
        <end position="1853"/>
    </location>
    <ligand>
        <name>substrate</name>
        <note>for mRNA (nucleoside-2'-O-)-methyltransferase activity</note>
    </ligand>
</feature>
<feature type="sequence variant">
    <original>S</original>
    <variation>R</variation>
    <location>
        <position position="459"/>
    </location>
</feature>
<feature type="sequence variant">
    <original>T</original>
    <variation>S</variation>
    <location>
        <position position="788"/>
    </location>
</feature>
<evidence type="ECO:0000250" key="1">
    <source>
        <dbReference type="UniProtKB" id="P03523"/>
    </source>
</evidence>
<evidence type="ECO:0000250" key="2">
    <source>
        <dbReference type="UniProtKB" id="P28887"/>
    </source>
</evidence>
<evidence type="ECO:0000250" key="3">
    <source>
        <dbReference type="UniProtKB" id="Q6WB93"/>
    </source>
</evidence>
<evidence type="ECO:0000255" key="4">
    <source>
        <dbReference type="PROSITE-ProRule" id="PRU00539"/>
    </source>
</evidence>
<evidence type="ECO:0000255" key="5">
    <source>
        <dbReference type="PROSITE-ProRule" id="PRU00923"/>
    </source>
</evidence>
<evidence type="ECO:0000305" key="6"/>
<proteinExistence type="inferred from homology"/>
<protein>
    <recommendedName>
        <fullName>RNA-directed RNA polymerase L</fullName>
        <shortName>Protein L</shortName>
    </recommendedName>
    <alternativeName>
        <fullName>Large structural protein</fullName>
    </alternativeName>
    <alternativeName>
        <fullName>Replicase</fullName>
    </alternativeName>
    <alternativeName>
        <fullName>Transcriptase</fullName>
    </alternativeName>
    <domain>
        <recommendedName>
            <fullName>RNA-directed RNA polymerase</fullName>
            <ecNumber evidence="2">2.7.7.48</ecNumber>
        </recommendedName>
    </domain>
    <domain>
        <recommendedName>
            <fullName evidence="2">GTP phosphohydrolase</fullName>
            <ecNumber evidence="2">3.6.1.-</ecNumber>
        </recommendedName>
    </domain>
    <domain>
        <recommendedName>
            <fullName evidence="6">GDP polyribonucleotidyltransferase</fullName>
            <ecNumber evidence="2">2.7.7.88</ecNumber>
        </recommendedName>
        <alternativeName>
            <fullName evidence="6">PRNTase</fullName>
        </alternativeName>
    </domain>
    <domain>
        <recommendedName>
            <fullName evidence="6">mRNA cap methyltransferase</fullName>
            <ecNumber evidence="1">2.1.1.375</ecNumber>
        </recommendedName>
        <alternativeName>
            <fullName evidence="1">mRNA (guanine-N(7)-)-methyltransferase</fullName>
            <shortName evidence="1">G-N7-MTase</shortName>
        </alternativeName>
        <alternativeName>
            <fullName evidence="1">mRNA (nucleoside-2'-O-)-methyltransferase</fullName>
            <shortName evidence="1">N1-2'-O-MTase</shortName>
        </alternativeName>
    </domain>
</protein>
<reference key="1">
    <citation type="journal article" date="1998" name="J. Gen. Virol.">
        <title>Sequence analysis of a functional polymerase (L) gene of bovine respiratory syncytial virus: determination of minimal trans-acting requirements for RNA replication.</title>
        <authorList>
            <person name="Yunus A.S."/>
            <person name="Collins P.L."/>
            <person name="Samal S.K."/>
        </authorList>
    </citation>
    <scope>NUCLEOTIDE SEQUENCE [GENOMIC RNA]</scope>
</reference>
<reference key="2">
    <citation type="journal article" date="2001" name="Virus Genes">
        <title>Rescue of bovine respiratory syncytial virus from cloned cDNA: entire genome sequence of BRSV strain A51908.</title>
        <authorList>
            <person name="Yunus A.S."/>
            <person name="Khattar S.K."/>
            <person name="Collins P.L."/>
            <person name="Samal S.K."/>
        </authorList>
    </citation>
    <scope>NUCLEOTIDE SEQUENCE [GENOMIC RNA]</scope>
    <source>
        <strain>ATCC51908</strain>
    </source>
</reference>
<organism>
    <name type="scientific">Bovine respiratory syncytial virus (strain A51908)</name>
    <name type="common">BRS</name>
    <dbReference type="NCBI Taxonomy" id="11247"/>
    <lineage>
        <taxon>Viruses</taxon>
        <taxon>Riboviria</taxon>
        <taxon>Orthornavirae</taxon>
        <taxon>Negarnaviricota</taxon>
        <taxon>Haploviricotina</taxon>
        <taxon>Monjiviricetes</taxon>
        <taxon>Mononegavirales</taxon>
        <taxon>Pneumoviridae</taxon>
        <taxon>Orthopneumovirus</taxon>
        <taxon>Orthopneumovirus bovis</taxon>
        <taxon>bovine respiratory syncytial virus</taxon>
    </lineage>
</organism>
<comment type="function">
    <text evidence="1 2">Responsible for RNA synthesis (replicase and transcriptase), cap addition, and cap methylation. Also performs the polyadenylation of subgenomic mRNAs by a stuttering mechanism at a slipery stop site present at the end of viral genes. The template is composed of the viral RNA tightly encapsidated by the nucleoprotein (N). The viral polymerase binds to the genomic RNA at two different sites in the 3' leader promoter thereby initiating either genome replication or mRNA transcription. In the transcription mode, the polymerase performs the sequential transcription of all mRNAs using a termination-reinitiation mechanism responding to gene start and gene end signals. Some polymerase disengage from the template at each gene junction, resulting in a decreasing abundance of transcripts from the 3' to the 5' end of the genome. The first gene is the most transcribed, and the last the least transcribed. Needs as cofactors the phosphoprotein for processivity and the M2-1 anti-termination protein. Polyribonucleotidyl transferase (PRNTase) adds the cap structure when the nascent RNA chain length has reached few nucleotides (By similarity). Ribose 2'-O methylation of viral mRNA cap precedes and facilitates subsequent guanine-N-7 methylation (By similarity). In the replication mode, the polymerase replicates the whole viral genome without recognizing the gene end transcriptional signals. The ability of the polymerase to override the gene end signals as it is producing the antigenome is probably due to replicative RNA becoming encapsidated with nucleoprotein as it is synthesized (By similarity).</text>
</comment>
<comment type="catalytic activity">
    <reaction evidence="4">
        <text>RNA(n) + a ribonucleoside 5'-triphosphate = RNA(n+1) + diphosphate</text>
        <dbReference type="Rhea" id="RHEA:21248"/>
        <dbReference type="Rhea" id="RHEA-COMP:14527"/>
        <dbReference type="Rhea" id="RHEA-COMP:17342"/>
        <dbReference type="ChEBI" id="CHEBI:33019"/>
        <dbReference type="ChEBI" id="CHEBI:61557"/>
        <dbReference type="ChEBI" id="CHEBI:140395"/>
        <dbReference type="EC" id="2.7.7.48"/>
    </reaction>
</comment>
<comment type="catalytic activity">
    <reaction evidence="2">
        <text>GTP + H2O = GDP + phosphate + H(+)</text>
        <dbReference type="Rhea" id="RHEA:19669"/>
        <dbReference type="ChEBI" id="CHEBI:15377"/>
        <dbReference type="ChEBI" id="CHEBI:15378"/>
        <dbReference type="ChEBI" id="CHEBI:37565"/>
        <dbReference type="ChEBI" id="CHEBI:43474"/>
        <dbReference type="ChEBI" id="CHEBI:58189"/>
    </reaction>
</comment>
<comment type="catalytic activity">
    <reaction evidence="2">
        <text>a 5'-end triphospho-adenylyl-adenylyl-cytidylyl-adenosine in mRNA + GDP + H(+) = a 5'-end (5'-triphosphoguanosine)-adenylyl-adenylyl-cytidylyl-adenosine in mRNA + diphosphate</text>
        <dbReference type="Rhea" id="RHEA:65436"/>
        <dbReference type="Rhea" id="RHEA-COMP:16797"/>
        <dbReference type="Rhea" id="RHEA-COMP:16799"/>
        <dbReference type="ChEBI" id="CHEBI:15378"/>
        <dbReference type="ChEBI" id="CHEBI:33019"/>
        <dbReference type="ChEBI" id="CHEBI:58189"/>
        <dbReference type="ChEBI" id="CHEBI:156484"/>
        <dbReference type="ChEBI" id="CHEBI:156503"/>
        <dbReference type="EC" id="2.7.7.88"/>
    </reaction>
</comment>
<comment type="catalytic activity">
    <reaction evidence="1">
        <text>a 5'-end (5'-triphosphoguanosine)-adenylyl-adenylyl-cytidylyl-adenosine in mRNA + 2 S-adenosyl-L-methionine = a 5'-end (N(7)-methyl 5'-triphosphoguanosine)-(2'-O-methyladenylyl)-adenylyl-cytidylyl-adenosine in mRNA + 2 S-adenosyl-L-homocysteine + H(+)</text>
        <dbReference type="Rhea" id="RHEA:65376"/>
        <dbReference type="Rhea" id="RHEA-COMP:16797"/>
        <dbReference type="Rhea" id="RHEA-COMP:16798"/>
        <dbReference type="ChEBI" id="CHEBI:15378"/>
        <dbReference type="ChEBI" id="CHEBI:57856"/>
        <dbReference type="ChEBI" id="CHEBI:59789"/>
        <dbReference type="ChEBI" id="CHEBI:156483"/>
        <dbReference type="ChEBI" id="CHEBI:156484"/>
        <dbReference type="EC" id="2.1.1.375"/>
    </reaction>
</comment>
<comment type="catalytic activity">
    <reaction evidence="1">
        <text>a 5'-end (5'-triphosphoguanosine)-adenylyl-adenylyl-cytidylyl-adenosine in mRNA + S-adenosyl-L-methionine = a 5'-end (5'-triphosphoguanosine)-(2'-O-methyladenylyl)-adenylyl-cytidylyl-adenosine in mRNA + S-adenosyl-L-homocysteine + H(+)</text>
        <dbReference type="Rhea" id="RHEA:65380"/>
        <dbReference type="Rhea" id="RHEA-COMP:16797"/>
        <dbReference type="Rhea" id="RHEA-COMP:16801"/>
        <dbReference type="ChEBI" id="CHEBI:15378"/>
        <dbReference type="ChEBI" id="CHEBI:57856"/>
        <dbReference type="ChEBI" id="CHEBI:59789"/>
        <dbReference type="ChEBI" id="CHEBI:156482"/>
        <dbReference type="ChEBI" id="CHEBI:156484"/>
    </reaction>
</comment>
<comment type="catalytic activity">
    <reaction evidence="1">
        <text>a 5'-end (5'-triphosphoguanosine)-(2'-O-methyladenylyl)-adenylyl-cytidylyl-adenosine in mRNA + S-adenosyl-L-methionine = a 5'-end (N(7)-methyl 5'-triphosphoguanosine)-(2'-O-methyladenylyl)-adenylyl-cytidylyl-adenosine in mRNA + S-adenosyl-L-homocysteine</text>
        <dbReference type="Rhea" id="RHEA:65440"/>
        <dbReference type="Rhea" id="RHEA-COMP:16798"/>
        <dbReference type="Rhea" id="RHEA-COMP:16801"/>
        <dbReference type="ChEBI" id="CHEBI:57856"/>
        <dbReference type="ChEBI" id="CHEBI:59789"/>
        <dbReference type="ChEBI" id="CHEBI:156482"/>
        <dbReference type="ChEBI" id="CHEBI:156483"/>
    </reaction>
</comment>
<comment type="cofactor">
    <cofactor evidence="2">
        <name>Mg(2+)</name>
        <dbReference type="ChEBI" id="CHEBI:18420"/>
    </cofactor>
    <text evidence="2">For RNA-directed RNA polymerase activity. Mn(2+) can stimulate de novo initiation but it is inefficient at supporting elongation of de novo initiated RNA.</text>
</comment>
<comment type="subunit">
    <text evidence="2">Interacts with the phosphoprotein (via C-terminus); the association of P and L forms the polymerase complex.</text>
</comment>
<comment type="subcellular location">
    <subcellularLocation>
        <location evidence="2">Virion</location>
    </subcellularLocation>
    <subcellularLocation>
        <location evidence="2">Host cytoplasm</location>
    </subcellularLocation>
    <text evidence="2">Localizes in cytoplasmic inclusion bodies.</text>
</comment>
<comment type="domain">
    <text evidence="2">Contains an RNA-dependent RNA polymerase (RdRp) domain, a polyribonucleotidyl transferase (PRNTase or capping) domain and a methyltransferase (MTase) domain.</text>
</comment>
<comment type="similarity">
    <text evidence="6">Belongs to the paramyxovirus L protein family.</text>
</comment>
<organismHost>
    <name type="scientific">Bos taurus</name>
    <name type="common">Bovine</name>
    <dbReference type="NCBI Taxonomy" id="9913"/>
</organismHost>
<name>L_BRSVA</name>
<accession>O91940</accession>
<accession>Q77KZ5</accession>
<gene>
    <name type="primary">L</name>
</gene>
<keyword id="KW-0067">ATP-binding</keyword>
<keyword id="KW-1035">Host cytoplasm</keyword>
<keyword id="KW-0378">Hydrolase</keyword>
<keyword id="KW-0460">Magnesium</keyword>
<keyword id="KW-0479">Metal-binding</keyword>
<keyword id="KW-0489">Methyltransferase</keyword>
<keyword id="KW-0506">mRNA capping</keyword>
<keyword id="KW-0507">mRNA processing</keyword>
<keyword id="KW-0511">Multifunctional enzyme</keyword>
<keyword id="KW-0547">Nucleotide-binding</keyword>
<keyword id="KW-0548">Nucleotidyltransferase</keyword>
<keyword id="KW-1185">Reference proteome</keyword>
<keyword id="KW-0696">RNA-directed RNA polymerase</keyword>
<keyword id="KW-0949">S-adenosyl-L-methionine</keyword>
<keyword id="KW-0808">Transferase</keyword>
<keyword id="KW-0693">Viral RNA replication</keyword>
<keyword id="KW-0946">Virion</keyword>
<sequence>MDTLIHENSTNVYLTDSYLKGVISFSECNALGSYLLDGPYLKNDYTNIISRQKPLIEHINLKKLSIIQSFVTKYNKGELGLEEPTYFQSLLMTYKSLSTSELITTTTLFKKIIRRAIEISDVKVYAILNKLGLKEKGKVDRCDDTNTTLSNIVRDNILSVISDNTPSTKKPNNSSCKPDQPIKTTILCKLLSSMSHPPTWLIHWFNLYTKLNDILTQYRTNEARNHGYILIDTRTLGEFQFILNQYGCIVYHKKLKKITITTYNQFLTWKDISLSRLNVCMITWISNCLNTLNKSLGLRCEFNNVTLSQLFLHGDCILKLFHNEGYYIIKEVEGFIMSLILNLTEEDQFRKRFFNSMLNNITDAAARAQQDLLSRARHTILDKTISDNILNGKWLILLGKFLKLIKLAGANNLNNLSELYFLFRIFGHPMVDERQAMDAVRLNCNETKFYLLSSLSMLSGAFIYRIIKGFVNTYNRWPTLRNAIVLPLRWINYYKLNTYPSLLELTEADLIILSGLRFYREFHLPKKVDLEVIINDKAISPPKNLIWTSFPKNYMPSHIQIYIEHERLKFTESDRSRRVLEYYLRNNRFSESDLYNCIVNQEYLNNPNHVISLTGKERELSVGRMFAMQPGMFRQVQIMAEKLIAENILQFFPESLTRYGDLELQKILELKAGISNKANRCNDNYNNYISKCSIITDLSKFNQAFRYETSCICSDVLDELHGVQSLFSWLHLTIPFATVICTYRHAPPYIRNHITDLNKVDEQSGLYRYHMGGIEGWCQKLWTIEAITLLDLISIKGKFSITALINGDNQSIDISKPIKLNEGQTHAQADYLLALKSLKLLYKEYASIGHKLKGTETYISRDMQFMSKTIQHNGVYYPASIKKVLRVGPWINTILDDFKVSMESIGSLTQELEYRGESLLCSLIFRNVWLYNQIALQLKNHALCHNKLYLDILKVLAHLKMFFNLDNIDTALTLYMNLPMLFGGGDPNLLYRSFYRRTPDFLTEAIAHSVFVLSYYTGHDLQDKLQDLPDDKLNKFLTCIITFDKNPNAEFVTLMRDPQALGSERQAKVTSEINRLAVTEVLSNAPNKIFAKSAQHYTTTEVDLNDVMQKIEPTYPHGLRVVYESLPFYKAEKIVNLISGTKSITNILEKTSAIDYTDIERAIDMMRKNITLLIRILPLDYNKAKLGLLSLNNLSITDISKYVRERSWSLSNIVGITSPSILYTMDIKYTTSTITSGIIIEKYNSNFLTRGERGPTKPWVGSSTQEKKTMPVYNRQVLTKKQKDQIDLLAKLDWVYASIDNKDEFMEVLCLGTLGLSYEKAKKLFPQYLSVNYLHRLTVSSRPCEFPASIPAYRTTNYHFDTSPINRILTEKYGDEDIDIVFQNCISFGLSLMSVVEQFTNVCPNRIILIPKLNEIHLMKPPIFTGDVDICKLNQVIQKQHMFLPDKISLSQYVELFLSNKTLKNSPHISSNLVLVHKMSDYFLHKYVLSTNLAGHWIMIIQLMKDSKGIFEKDWGEGYITDHMFLDLNVFFDAYKTYLLCFHKGYGKAKLECDMNTSDLFCTLELIDISYWKSMSKVFLEQKVVKHIINQDSSLHRVRGCHSFKLWFLKRLNTSKFIVCPWVVNIDYHPTHMKAILTYMELTTMGLVHVDKLYTDQKHKLNDGFYTSNLFYINYNFSDNTHLLTKQIRVANSELIDNYNTLYHPSPESLESILKRSNQSNNVIELKDYPIDKFQSPKGRGVSDITCISSNQKIKQGYNNQDLYNLFPAVIIDKIVDHSGNIANINQMYTITPNQLTLISNGTSLYCMLPWHHINRFNFVFSSTGCKISTKLILKDLKIKDPHCIAFIGEGAGNLLLRTVVELHPDIKYIYRSLKDCNDHSLPIEFLRLYNGHISIDYGENLTIPATDATNAIHWSYLHIRYAEPINLFVCDAELPDLTNWSRIVSEWYKHVRCCKYCSTIDRSKLIVKYHAQDITDFKLNNISIVKTYVCLGSKLKGSEVYLVLTVGPSNIFPSFNVVQNAKLILSRTQNFPMPKKIDKDSVDANIKSLIPFLCYPITKKGIKAALSKLKDVVDGNILSYSIAGRNEVYSNKLINYKLLNILKWLDHILNFRSLEFSYNHLYMIESTYPFLSELLNSLTTNELKKLIKVTGSVLYSLQHEL</sequence>
<dbReference type="EC" id="2.7.7.48" evidence="2"/>
<dbReference type="EC" id="3.6.1.-" evidence="2"/>
<dbReference type="EC" id="2.7.7.88" evidence="2"/>
<dbReference type="EC" id="2.1.1.375" evidence="1"/>
<dbReference type="EMBL" id="AF065167">
    <property type="protein sequence ID" value="AAC36684.1"/>
    <property type="molecule type" value="Genomic_RNA"/>
</dbReference>
<dbReference type="EMBL" id="AF295543">
    <property type="protein sequence ID" value="AAL49402.1"/>
    <property type="molecule type" value="Genomic_RNA"/>
</dbReference>
<dbReference type="SMR" id="O91940"/>
<dbReference type="IntAct" id="O91940">
    <property type="interactions" value="1"/>
</dbReference>
<dbReference type="Proteomes" id="UP000007616">
    <property type="component" value="Genome"/>
</dbReference>
<dbReference type="GO" id="GO:0030430">
    <property type="term" value="C:host cell cytoplasm"/>
    <property type="evidence" value="ECO:0007669"/>
    <property type="project" value="UniProtKB-SubCell"/>
</dbReference>
<dbReference type="GO" id="GO:0044423">
    <property type="term" value="C:virion component"/>
    <property type="evidence" value="ECO:0007669"/>
    <property type="project" value="UniProtKB-KW"/>
</dbReference>
<dbReference type="GO" id="GO:0005524">
    <property type="term" value="F:ATP binding"/>
    <property type="evidence" value="ECO:0007669"/>
    <property type="project" value="UniProtKB-KW"/>
</dbReference>
<dbReference type="GO" id="GO:0003924">
    <property type="term" value="F:GTPase activity"/>
    <property type="evidence" value="ECO:0007669"/>
    <property type="project" value="RHEA"/>
</dbReference>
<dbReference type="GO" id="GO:0046872">
    <property type="term" value="F:metal ion binding"/>
    <property type="evidence" value="ECO:0007669"/>
    <property type="project" value="UniProtKB-KW"/>
</dbReference>
<dbReference type="GO" id="GO:0004482">
    <property type="term" value="F:mRNA 5'-cap (guanine-N7-)-methyltransferase activity"/>
    <property type="evidence" value="ECO:0007669"/>
    <property type="project" value="InterPro"/>
</dbReference>
<dbReference type="GO" id="GO:0003968">
    <property type="term" value="F:RNA-directed RNA polymerase activity"/>
    <property type="evidence" value="ECO:0007669"/>
    <property type="project" value="UniProtKB-KW"/>
</dbReference>
<dbReference type="InterPro" id="IPR039530">
    <property type="entry name" value="L_methyltransferase_rhabdo"/>
</dbReference>
<dbReference type="InterPro" id="IPR039736">
    <property type="entry name" value="L_poly_C"/>
</dbReference>
<dbReference type="InterPro" id="IPR026890">
    <property type="entry name" value="Mononeg_mRNAcap"/>
</dbReference>
<dbReference type="InterPro" id="IPR014023">
    <property type="entry name" value="Mononeg_RNA_pol_cat"/>
</dbReference>
<dbReference type="InterPro" id="IPR025786">
    <property type="entry name" value="Mononega_L_MeTrfase"/>
</dbReference>
<dbReference type="InterPro" id="IPR016269">
    <property type="entry name" value="RNA-dir_pol_paramyxovirus"/>
</dbReference>
<dbReference type="NCBIfam" id="TIGR04198">
    <property type="entry name" value="paramyx_RNAcap"/>
    <property type="match status" value="1"/>
</dbReference>
<dbReference type="Pfam" id="PF14314">
    <property type="entry name" value="Methyltrans_Mon_2nd"/>
    <property type="match status" value="1"/>
</dbReference>
<dbReference type="Pfam" id="PF14318">
    <property type="entry name" value="Mononeg_mRNAcap"/>
    <property type="match status" value="1"/>
</dbReference>
<dbReference type="Pfam" id="PF00946">
    <property type="entry name" value="Mononeg_RNA_pol"/>
    <property type="match status" value="1"/>
</dbReference>
<dbReference type="PIRSF" id="PIRSF000830">
    <property type="entry name" value="RNA_pol_ParamyxoV"/>
    <property type="match status" value="1"/>
</dbReference>
<dbReference type="PROSITE" id="PS50526">
    <property type="entry name" value="RDRP_SSRNA_NEG_NONSEG"/>
    <property type="match status" value="1"/>
</dbReference>
<dbReference type="PROSITE" id="PS51590">
    <property type="entry name" value="SAM_MT_MNV_L"/>
    <property type="match status" value="1"/>
</dbReference>